<protein>
    <recommendedName>
        <fullName evidence="1">Molybdopterin synthase sulfur carrier subunit</fullName>
    </recommendedName>
    <alternativeName>
        <fullName evidence="1">Molybdenum cofactor synthesis protein 2 small subunit</fullName>
    </alternativeName>
    <alternativeName>
        <fullName evidence="1">Molybdenum cofactor synthesis protein 2A</fullName>
        <shortName evidence="1">MOCS2A</shortName>
    </alternativeName>
    <alternativeName>
        <fullName evidence="1">Sulfur carrier protein MOCS2A</fullName>
    </alternativeName>
</protein>
<comment type="function">
    <text evidence="1">Acts as a sulfur carrier required for molybdopterin biosynthesis. Component of the molybdopterin synthase complex that catalyzes the conversion of precursor Z into molybdopterin by mediating the incorporation of 2 sulfur atoms into precursor Z to generate a dithiolene group. In the complex, serves as sulfur donor by being thiocarboxylated (-COSH) at its C-terminus by MOCS3. After interaction with MOCS2B, the sulfur is then transferred to precursor Z to form molybdopterin.</text>
</comment>
<comment type="pathway">
    <text evidence="1">Cofactor biosynthesis; molybdopterin biosynthesis.</text>
</comment>
<comment type="subunit">
    <text evidence="1">Heterotetramer; composed of 2 small (MOCS2A) and 2 large (MOCS2B) subunits.</text>
</comment>
<comment type="subcellular location">
    <subcellularLocation>
        <location evidence="1">Cytoplasm</location>
    </subcellularLocation>
</comment>
<comment type="PTM">
    <text evidence="1">C-terminal thiocarboxylation occurs in 2 steps, it is first acyl-adenylated (-COAMP) via the hesA/moeB/thiF part of MOCS3, then thiocarboxylated (-COSH) via the rhodanese domain of MOCS3.</text>
</comment>
<comment type="miscellaneous">
    <text>This protein is produced by a bicistronic gene which also produces the large subunit (MOCS2B).</text>
</comment>
<comment type="similarity">
    <text evidence="1">Belongs to the MoaD family. MOCS2A subfamily.</text>
</comment>
<keyword id="KW-0963">Cytoplasm</keyword>
<keyword id="KW-0501">Molybdenum cofactor biosynthesis</keyword>
<keyword id="KW-0547">Nucleotide-binding</keyword>
<keyword id="KW-0597">Phosphoprotein</keyword>
<keyword id="KW-1185">Reference proteome</keyword>
<reference key="1">
    <citation type="journal article" date="2007" name="Science">
        <title>Genome sequence of Aedes aegypti, a major arbovirus vector.</title>
        <authorList>
            <person name="Nene V."/>
            <person name="Wortman J.R."/>
            <person name="Lawson D."/>
            <person name="Haas B.J."/>
            <person name="Kodira C.D."/>
            <person name="Tu Z.J."/>
            <person name="Loftus B.J."/>
            <person name="Xi Z."/>
            <person name="Megy K."/>
            <person name="Grabherr M."/>
            <person name="Ren Q."/>
            <person name="Zdobnov E.M."/>
            <person name="Lobo N.F."/>
            <person name="Campbell K.S."/>
            <person name="Brown S.E."/>
            <person name="Bonaldo M.F."/>
            <person name="Zhu J."/>
            <person name="Sinkins S.P."/>
            <person name="Hogenkamp D.G."/>
            <person name="Amedeo P."/>
            <person name="Arensburger P."/>
            <person name="Atkinson P.W."/>
            <person name="Bidwell S.L."/>
            <person name="Biedler J."/>
            <person name="Birney E."/>
            <person name="Bruggner R.V."/>
            <person name="Costas J."/>
            <person name="Coy M.R."/>
            <person name="Crabtree J."/>
            <person name="Crawford M."/>
            <person name="DeBruyn B."/>
            <person name="DeCaprio D."/>
            <person name="Eiglmeier K."/>
            <person name="Eisenstadt E."/>
            <person name="El-Dorry H."/>
            <person name="Gelbart W.M."/>
            <person name="Gomes S.L."/>
            <person name="Hammond M."/>
            <person name="Hannick L.I."/>
            <person name="Hogan J.R."/>
            <person name="Holmes M.H."/>
            <person name="Jaffe D."/>
            <person name="Johnston S.J."/>
            <person name="Kennedy R.C."/>
            <person name="Koo H."/>
            <person name="Kravitz S."/>
            <person name="Kriventseva E.V."/>
            <person name="Kulp D."/>
            <person name="Labutti K."/>
            <person name="Lee E."/>
            <person name="Li S."/>
            <person name="Lovin D.D."/>
            <person name="Mao C."/>
            <person name="Mauceli E."/>
            <person name="Menck C.F."/>
            <person name="Miller J.R."/>
            <person name="Montgomery P."/>
            <person name="Mori A."/>
            <person name="Nascimento A.L."/>
            <person name="Naveira H.F."/>
            <person name="Nusbaum C."/>
            <person name="O'Leary S.B."/>
            <person name="Orvis J."/>
            <person name="Pertea M."/>
            <person name="Quesneville H."/>
            <person name="Reidenbach K.R."/>
            <person name="Rogers Y.-H.C."/>
            <person name="Roth C.W."/>
            <person name="Schneider J.R."/>
            <person name="Schatz M."/>
            <person name="Shumway M."/>
            <person name="Stanke M."/>
            <person name="Stinson E.O."/>
            <person name="Tubio J.M.C."/>
            <person name="Vanzee J.P."/>
            <person name="Verjovski-Almeida S."/>
            <person name="Werner D."/>
            <person name="White O.R."/>
            <person name="Wyder S."/>
            <person name="Zeng Q."/>
            <person name="Zhao Q."/>
            <person name="Zhao Y."/>
            <person name="Hill C.A."/>
            <person name="Raikhel A.S."/>
            <person name="Soares M.B."/>
            <person name="Knudson D.L."/>
            <person name="Lee N.H."/>
            <person name="Galagan J."/>
            <person name="Salzberg S.L."/>
            <person name="Paulsen I.T."/>
            <person name="Dimopoulos G."/>
            <person name="Collins F.H."/>
            <person name="Bruce B."/>
            <person name="Fraser-Liggett C.M."/>
            <person name="Severson D.W."/>
        </authorList>
    </citation>
    <scope>NUCLEOTIDE SEQUENCE [LARGE SCALE GENOMIC DNA]</scope>
    <source>
        <strain>LVPib12</strain>
    </source>
</reference>
<proteinExistence type="inferred from homology"/>
<sequence length="98" mass="10437">MSQGHRSEEVVRVNLLFFAKSRELVGTSSLDNFPLATSGGHLSGSAVLGTICERFPELVAIRDSVIIAHNEQYCEDLTEPISLADGDEIAVIPPIAGG</sequence>
<feature type="chain" id="PRO_0000369308" description="Molybdopterin synthase sulfur carrier subunit">
    <location>
        <begin position="1"/>
        <end position="98"/>
    </location>
</feature>
<feature type="modified residue" description="1-thioglycine; alternate" evidence="1">
    <location>
        <position position="98"/>
    </location>
</feature>
<feature type="modified residue" description="Glycyl adenylate; alternate" evidence="1">
    <location>
        <position position="98"/>
    </location>
</feature>
<name>MOC2A_AEDAE</name>
<evidence type="ECO:0000255" key="1">
    <source>
        <dbReference type="HAMAP-Rule" id="MF_03051"/>
    </source>
</evidence>
<gene>
    <name evidence="1" type="primary">Mocs2-1</name>
    <name type="ORF">AAEL007643</name>
</gene>
<gene>
    <name evidence="1" type="primary">Mocs2-1</name>
    <name type="ORF">AAEL015583</name>
</gene>
<dbReference type="EMBL" id="CH901307">
    <property type="protein sequence ID" value="EAT32295.1"/>
    <property type="molecule type" value="Genomic_DNA"/>
</dbReference>
<dbReference type="EMBL" id="CH477455">
    <property type="protein sequence ID" value="EAT40642.1"/>
    <property type="molecule type" value="Genomic_DNA"/>
</dbReference>
<dbReference type="RefSeq" id="XP_001647627.1">
    <property type="nucleotide sequence ID" value="XM_001647577.1"/>
</dbReference>
<dbReference type="RefSeq" id="XP_001658544.1">
    <property type="nucleotide sequence ID" value="XM_001658494.1"/>
</dbReference>
<dbReference type="SMR" id="Q1DGL5"/>
<dbReference type="FunCoup" id="Q1DGL5">
    <property type="interactions" value="12"/>
</dbReference>
<dbReference type="STRING" id="7159.Q1DGL5"/>
<dbReference type="PaxDb" id="7159-AAEL007643-PA"/>
<dbReference type="eggNOG" id="KOG3474">
    <property type="taxonomic scope" value="Eukaryota"/>
</dbReference>
<dbReference type="HOGENOM" id="CLU_114601_4_3_1"/>
<dbReference type="InParanoid" id="Q1DGL5"/>
<dbReference type="OMA" id="EIVGHKE"/>
<dbReference type="PhylomeDB" id="Q1DGL5"/>
<dbReference type="UniPathway" id="UPA00344"/>
<dbReference type="Proteomes" id="UP000008820">
    <property type="component" value="Unassembled WGS sequence"/>
</dbReference>
<dbReference type="Proteomes" id="UP000682892">
    <property type="component" value="Unassembled WGS sequence"/>
</dbReference>
<dbReference type="GO" id="GO:0005829">
    <property type="term" value="C:cytosol"/>
    <property type="evidence" value="ECO:0000250"/>
    <property type="project" value="UniProtKB"/>
</dbReference>
<dbReference type="GO" id="GO:1990133">
    <property type="term" value="C:molybdopterin adenylyltransferase complex"/>
    <property type="evidence" value="ECO:0007669"/>
    <property type="project" value="TreeGrafter"/>
</dbReference>
<dbReference type="GO" id="GO:1990140">
    <property type="term" value="C:molybdopterin synthase complex"/>
    <property type="evidence" value="ECO:0000250"/>
    <property type="project" value="UniProtKB"/>
</dbReference>
<dbReference type="GO" id="GO:0030366">
    <property type="term" value="F:molybdopterin synthase activity"/>
    <property type="evidence" value="ECO:0007669"/>
    <property type="project" value="UniProtKB-UniRule"/>
</dbReference>
<dbReference type="GO" id="GO:0000166">
    <property type="term" value="F:nucleotide binding"/>
    <property type="evidence" value="ECO:0007669"/>
    <property type="project" value="UniProtKB-KW"/>
</dbReference>
<dbReference type="GO" id="GO:0006777">
    <property type="term" value="P:Mo-molybdopterin cofactor biosynthetic process"/>
    <property type="evidence" value="ECO:0000250"/>
    <property type="project" value="UniProtKB"/>
</dbReference>
<dbReference type="CDD" id="cd00754">
    <property type="entry name" value="Ubl_MoaD"/>
    <property type="match status" value="1"/>
</dbReference>
<dbReference type="FunFam" id="3.10.20.30:FF:000010">
    <property type="entry name" value="Molybdopterin synthase sulfur carrier subunit"/>
    <property type="match status" value="1"/>
</dbReference>
<dbReference type="Gene3D" id="3.10.20.30">
    <property type="match status" value="1"/>
</dbReference>
<dbReference type="HAMAP" id="MF_03051">
    <property type="entry name" value="MOCS2A"/>
    <property type="match status" value="1"/>
</dbReference>
<dbReference type="InterPro" id="IPR012675">
    <property type="entry name" value="Beta-grasp_dom_sf"/>
</dbReference>
<dbReference type="InterPro" id="IPR044672">
    <property type="entry name" value="MOCS2A"/>
</dbReference>
<dbReference type="InterPro" id="IPR028887">
    <property type="entry name" value="MOCS2A_euk"/>
</dbReference>
<dbReference type="InterPro" id="IPR016155">
    <property type="entry name" value="Mopterin_synth/thiamin_S_b"/>
</dbReference>
<dbReference type="InterPro" id="IPR003749">
    <property type="entry name" value="ThiS/MoaD-like"/>
</dbReference>
<dbReference type="PANTHER" id="PTHR33359">
    <property type="entry name" value="MOLYBDOPTERIN SYNTHASE SULFUR CARRIER SUBUNIT"/>
    <property type="match status" value="1"/>
</dbReference>
<dbReference type="PANTHER" id="PTHR33359:SF1">
    <property type="entry name" value="MOLYBDOPTERIN SYNTHASE SULFUR CARRIER SUBUNIT"/>
    <property type="match status" value="1"/>
</dbReference>
<dbReference type="Pfam" id="PF02597">
    <property type="entry name" value="ThiS"/>
    <property type="match status" value="1"/>
</dbReference>
<dbReference type="SUPFAM" id="SSF54285">
    <property type="entry name" value="MoaD/ThiS"/>
    <property type="match status" value="1"/>
</dbReference>
<organism>
    <name type="scientific">Aedes aegypti</name>
    <name type="common">Yellowfever mosquito</name>
    <name type="synonym">Culex aegypti</name>
    <dbReference type="NCBI Taxonomy" id="7159"/>
    <lineage>
        <taxon>Eukaryota</taxon>
        <taxon>Metazoa</taxon>
        <taxon>Ecdysozoa</taxon>
        <taxon>Arthropoda</taxon>
        <taxon>Hexapoda</taxon>
        <taxon>Insecta</taxon>
        <taxon>Pterygota</taxon>
        <taxon>Neoptera</taxon>
        <taxon>Endopterygota</taxon>
        <taxon>Diptera</taxon>
        <taxon>Nematocera</taxon>
        <taxon>Culicoidea</taxon>
        <taxon>Culicidae</taxon>
        <taxon>Culicinae</taxon>
        <taxon>Aedini</taxon>
        <taxon>Aedes</taxon>
        <taxon>Stegomyia</taxon>
    </lineage>
</organism>
<accession>Q1DGL5</accession>